<keyword id="KW-1185">Reference proteome</keyword>
<evidence type="ECO:0000255" key="1">
    <source>
        <dbReference type="PROSITE-ProRule" id="PRU00092"/>
    </source>
</evidence>
<evidence type="ECO:0000256" key="2">
    <source>
        <dbReference type="SAM" id="MobiDB-lite"/>
    </source>
</evidence>
<evidence type="ECO:0000305" key="3"/>
<protein>
    <recommendedName>
        <fullName>G patch domain-containing protein 4</fullName>
    </recommendedName>
</protein>
<sequence>MSASSGEKSQGRRFAEQQMHKHGWTEGKGLGRRENGISEAIKVKVKCDHAGVGHNSAEQFTFHWWDHVFNKTASSISVEADQDGVKVNRTKDDDAPVTNKKPRKALSNRNMLYGRFVKSATLLPGGEQAVKEPSSSESSDSSGDEDEKLDLSSATKMTDEDLRKVCGGRTAHKGARHGLTMSAKLSRLEEQEREFLAKYGNKQQKDKVKAVTPEITEDLLGKNRQQNDSGECPETNNSHKKKKKKRERVDSEREEEEEEESQENRHEEEQVPLSEEEIKSSKKKKSKKKHREQSASPQEEQVTESTDFCIKPKKKKKKKNKSE</sequence>
<feature type="chain" id="PRO_0000287466" description="G patch domain-containing protein 4">
    <location>
        <begin position="1"/>
        <end position="323"/>
    </location>
</feature>
<feature type="domain" description="G-patch" evidence="1">
    <location>
        <begin position="11"/>
        <end position="57"/>
    </location>
</feature>
<feature type="region of interest" description="Disordered" evidence="2">
    <location>
        <begin position="1"/>
        <end position="32"/>
    </location>
</feature>
<feature type="region of interest" description="Disordered" evidence="2">
    <location>
        <begin position="84"/>
        <end position="110"/>
    </location>
</feature>
<feature type="region of interest" description="Disordered" evidence="2">
    <location>
        <begin position="124"/>
        <end position="185"/>
    </location>
</feature>
<feature type="region of interest" description="Disordered" evidence="2">
    <location>
        <begin position="197"/>
        <end position="323"/>
    </location>
</feature>
<feature type="compositionally biased region" description="Basic and acidic residues" evidence="2">
    <location>
        <begin position="9"/>
        <end position="32"/>
    </location>
</feature>
<feature type="compositionally biased region" description="Basic and acidic residues" evidence="2">
    <location>
        <begin position="84"/>
        <end position="94"/>
    </location>
</feature>
<feature type="compositionally biased region" description="Low complexity" evidence="2">
    <location>
        <begin position="131"/>
        <end position="141"/>
    </location>
</feature>
<feature type="compositionally biased region" description="Acidic residues" evidence="2">
    <location>
        <begin position="252"/>
        <end position="261"/>
    </location>
</feature>
<feature type="compositionally biased region" description="Basic residues" evidence="2">
    <location>
        <begin position="281"/>
        <end position="291"/>
    </location>
</feature>
<feature type="compositionally biased region" description="Polar residues" evidence="2">
    <location>
        <begin position="294"/>
        <end position="306"/>
    </location>
</feature>
<feature type="compositionally biased region" description="Basic residues" evidence="2">
    <location>
        <begin position="311"/>
        <end position="323"/>
    </location>
</feature>
<feature type="sequence conflict" description="In Ref. 1; CAJ82002." evidence="3" ref="1">
    <original>T</original>
    <variation>A</variation>
    <location>
        <position position="303"/>
    </location>
</feature>
<organism>
    <name type="scientific">Xenopus tropicalis</name>
    <name type="common">Western clawed frog</name>
    <name type="synonym">Silurana tropicalis</name>
    <dbReference type="NCBI Taxonomy" id="8364"/>
    <lineage>
        <taxon>Eukaryota</taxon>
        <taxon>Metazoa</taxon>
        <taxon>Chordata</taxon>
        <taxon>Craniata</taxon>
        <taxon>Vertebrata</taxon>
        <taxon>Euteleostomi</taxon>
        <taxon>Amphibia</taxon>
        <taxon>Batrachia</taxon>
        <taxon>Anura</taxon>
        <taxon>Pipoidea</taxon>
        <taxon>Pipidae</taxon>
        <taxon>Xenopodinae</taxon>
        <taxon>Xenopus</taxon>
        <taxon>Silurana</taxon>
    </lineage>
</organism>
<reference key="1">
    <citation type="submission" date="2006-10" db="EMBL/GenBank/DDBJ databases">
        <authorList>
            <consortium name="Sanger Xenopus tropicalis EST/cDNA project"/>
        </authorList>
    </citation>
    <scope>NUCLEOTIDE SEQUENCE [LARGE SCALE MRNA]</scope>
    <source>
        <tissue>Gastrula</tissue>
    </source>
</reference>
<reference key="2">
    <citation type="submission" date="2003-11" db="EMBL/GenBank/DDBJ databases">
        <authorList>
            <consortium name="NIH - Xenopus Gene Collection (XGC) project"/>
        </authorList>
    </citation>
    <scope>NUCLEOTIDE SEQUENCE [LARGE SCALE MRNA]</scope>
    <source>
        <tissue>Embryo</tissue>
    </source>
</reference>
<dbReference type="EMBL" id="CR761448">
    <property type="protein sequence ID" value="CAJ82002.1"/>
    <property type="molecule type" value="mRNA"/>
</dbReference>
<dbReference type="EMBL" id="BC061371">
    <property type="protein sequence ID" value="AAH61371.1"/>
    <property type="molecule type" value="mRNA"/>
</dbReference>
<dbReference type="RefSeq" id="NP_988976.1">
    <property type="nucleotide sequence ID" value="NM_203645.1"/>
</dbReference>
<dbReference type="RefSeq" id="XP_012808646.1">
    <property type="nucleotide sequence ID" value="XM_012953192.2"/>
</dbReference>
<dbReference type="STRING" id="8364.ENSXETP00000042194"/>
<dbReference type="PaxDb" id="8364-ENSXETP00000044005"/>
<dbReference type="GeneID" id="394573"/>
<dbReference type="KEGG" id="xtr:394573"/>
<dbReference type="AGR" id="Xenbase:XB-GENE-922177"/>
<dbReference type="CTD" id="54865"/>
<dbReference type="Xenbase" id="XB-GENE-922177">
    <property type="gene designation" value="gpatch4"/>
</dbReference>
<dbReference type="eggNOG" id="KOG2809">
    <property type="taxonomic scope" value="Eukaryota"/>
</dbReference>
<dbReference type="InParanoid" id="Q6P859"/>
<dbReference type="OMA" id="ILGKYGW"/>
<dbReference type="OrthoDB" id="10019757at2759"/>
<dbReference type="TreeFam" id="TF326721"/>
<dbReference type="Proteomes" id="UP000008143">
    <property type="component" value="Chromosome 8"/>
</dbReference>
<dbReference type="GO" id="GO:0003676">
    <property type="term" value="F:nucleic acid binding"/>
    <property type="evidence" value="ECO:0007669"/>
    <property type="project" value="InterPro"/>
</dbReference>
<dbReference type="InterPro" id="IPR000467">
    <property type="entry name" value="G_patch_dom"/>
</dbReference>
<dbReference type="InterPro" id="IPR050656">
    <property type="entry name" value="PINX1"/>
</dbReference>
<dbReference type="PANTHER" id="PTHR23149">
    <property type="entry name" value="G PATCH DOMAIN CONTAINING PROTEIN"/>
    <property type="match status" value="1"/>
</dbReference>
<dbReference type="PANTHER" id="PTHR23149:SF9">
    <property type="entry name" value="G PATCH DOMAIN-CONTAINING PROTEIN 4"/>
    <property type="match status" value="1"/>
</dbReference>
<dbReference type="Pfam" id="PF01585">
    <property type="entry name" value="G-patch"/>
    <property type="match status" value="1"/>
</dbReference>
<dbReference type="SMART" id="SM00443">
    <property type="entry name" value="G_patch"/>
    <property type="match status" value="1"/>
</dbReference>
<dbReference type="PROSITE" id="PS50174">
    <property type="entry name" value="G_PATCH"/>
    <property type="match status" value="1"/>
</dbReference>
<name>GPTC4_XENTR</name>
<accession>Q6P859</accession>
<accession>Q28GC3</accession>
<gene>
    <name type="primary">gpatch4</name>
    <name type="synonym">gpatc4</name>
    <name type="ORF">TGas105i04.1</name>
</gene>
<proteinExistence type="evidence at transcript level"/>